<evidence type="ECO:0000255" key="1">
    <source>
        <dbReference type="HAMAP-Rule" id="MF_00671"/>
    </source>
</evidence>
<accession>A8ZUI2</accession>
<gene>
    <name evidence="1" type="primary">tolB</name>
    <name type="ordered locus">Dole_2210</name>
</gene>
<organism>
    <name type="scientific">Desulfosudis oleivorans (strain DSM 6200 / JCM 39069 / Hxd3)</name>
    <name type="common">Desulfococcus oleovorans</name>
    <dbReference type="NCBI Taxonomy" id="96561"/>
    <lineage>
        <taxon>Bacteria</taxon>
        <taxon>Pseudomonadati</taxon>
        <taxon>Thermodesulfobacteriota</taxon>
        <taxon>Desulfobacteria</taxon>
        <taxon>Desulfobacterales</taxon>
        <taxon>Desulfosudaceae</taxon>
        <taxon>Desulfosudis</taxon>
    </lineage>
</organism>
<comment type="function">
    <text evidence="1">Part of the Tol-Pal system, which plays a role in outer membrane invagination during cell division and is important for maintaining outer membrane integrity.</text>
</comment>
<comment type="subunit">
    <text evidence="1">The Tol-Pal system is composed of five core proteins: the inner membrane proteins TolA, TolQ and TolR, the periplasmic protein TolB and the outer membrane protein Pal. They form a network linking the inner and outer membranes and the peptidoglycan layer.</text>
</comment>
<comment type="subcellular location">
    <subcellularLocation>
        <location evidence="1">Periplasm</location>
    </subcellularLocation>
</comment>
<comment type="similarity">
    <text evidence="1">Belongs to the TolB family.</text>
</comment>
<sequence>MVKRSLLVLALLICLPATLFAQYDYVRISNPFLHKIPIAVPLFQALTGTEPEVKAAQSGADLLADTLEFTRYFNLINRAAFLERPDRTGVTLADIDCKNWRDIGAEFLITGGVTVAGGMMEMELRLFDVFKERMILGKKYKGKPVDQRKMIRRFCAEVMEQLTGTPGIFESRIAFISTGDGSKEIYACEFDGYNPQRITRNSSINLSPAWSSDGQWLAYTSYRKGGPDLYITHLTENRGTVFSKEGINIAPSWVPGQFMLAATLSFEGDQEIYLLTGSGTVVRRLTRSWGIDVSPTFSPDGKRMAFVSGRAGSPQIFIMDMGSGRTQRLTFEGGYNTNPSWNPVNDTIAYCAMTGGAFNVRVIDVKTGATVALTADQGDNESPSWSPDGSLIAFSSTREAGVSRIYVMTAAGTDPRRLLILPGEQTGPKWSPAVAAGR</sequence>
<keyword id="KW-0131">Cell cycle</keyword>
<keyword id="KW-0132">Cell division</keyword>
<keyword id="KW-0574">Periplasm</keyword>
<keyword id="KW-1185">Reference proteome</keyword>
<keyword id="KW-0732">Signal</keyword>
<name>TOLB_DESOH</name>
<feature type="signal peptide" evidence="1">
    <location>
        <begin position="1"/>
        <end position="21"/>
    </location>
</feature>
<feature type="chain" id="PRO_1000131521" description="Tol-Pal system protein TolB" evidence="1">
    <location>
        <begin position="22"/>
        <end position="438"/>
    </location>
</feature>
<proteinExistence type="inferred from homology"/>
<reference key="1">
    <citation type="submission" date="2007-10" db="EMBL/GenBank/DDBJ databases">
        <title>Complete sequence of Desulfococcus oleovorans Hxd3.</title>
        <authorList>
            <consortium name="US DOE Joint Genome Institute"/>
            <person name="Copeland A."/>
            <person name="Lucas S."/>
            <person name="Lapidus A."/>
            <person name="Barry K."/>
            <person name="Glavina del Rio T."/>
            <person name="Dalin E."/>
            <person name="Tice H."/>
            <person name="Pitluck S."/>
            <person name="Kiss H."/>
            <person name="Brettin T."/>
            <person name="Bruce D."/>
            <person name="Detter J.C."/>
            <person name="Han C."/>
            <person name="Schmutz J."/>
            <person name="Larimer F."/>
            <person name="Land M."/>
            <person name="Hauser L."/>
            <person name="Kyrpides N."/>
            <person name="Kim E."/>
            <person name="Wawrik B."/>
            <person name="Richardson P."/>
        </authorList>
    </citation>
    <scope>NUCLEOTIDE SEQUENCE [LARGE SCALE GENOMIC DNA]</scope>
    <source>
        <strain>DSM 6200 / JCM 39069 / Hxd3</strain>
    </source>
</reference>
<dbReference type="EMBL" id="CP000859">
    <property type="protein sequence ID" value="ABW68014.1"/>
    <property type="molecule type" value="Genomic_DNA"/>
</dbReference>
<dbReference type="RefSeq" id="WP_012175626.1">
    <property type="nucleotide sequence ID" value="NC_009943.1"/>
</dbReference>
<dbReference type="SMR" id="A8ZUI2"/>
<dbReference type="STRING" id="96561.Dole_2210"/>
<dbReference type="KEGG" id="dol:Dole_2210"/>
<dbReference type="eggNOG" id="COG0823">
    <property type="taxonomic scope" value="Bacteria"/>
</dbReference>
<dbReference type="HOGENOM" id="CLU_047123_0_0_7"/>
<dbReference type="OrthoDB" id="9815657at2"/>
<dbReference type="Proteomes" id="UP000008561">
    <property type="component" value="Chromosome"/>
</dbReference>
<dbReference type="GO" id="GO:0042597">
    <property type="term" value="C:periplasmic space"/>
    <property type="evidence" value="ECO:0007669"/>
    <property type="project" value="UniProtKB-SubCell"/>
</dbReference>
<dbReference type="GO" id="GO:0051301">
    <property type="term" value="P:cell division"/>
    <property type="evidence" value="ECO:0007669"/>
    <property type="project" value="UniProtKB-KW"/>
</dbReference>
<dbReference type="GO" id="GO:0017038">
    <property type="term" value="P:protein import"/>
    <property type="evidence" value="ECO:0007669"/>
    <property type="project" value="InterPro"/>
</dbReference>
<dbReference type="Gene3D" id="2.140.10.30">
    <property type="entry name" value="Dipeptidylpeptidase IV, N-terminal domain"/>
    <property type="match status" value="1"/>
</dbReference>
<dbReference type="Gene3D" id="2.120.10.30">
    <property type="entry name" value="TolB, C-terminal domain"/>
    <property type="match status" value="2"/>
</dbReference>
<dbReference type="Gene3D" id="3.40.50.10070">
    <property type="entry name" value="TolB, N-terminal domain"/>
    <property type="match status" value="1"/>
</dbReference>
<dbReference type="HAMAP" id="MF_00671">
    <property type="entry name" value="TolB"/>
    <property type="match status" value="1"/>
</dbReference>
<dbReference type="InterPro" id="IPR011042">
    <property type="entry name" value="6-blade_b-propeller_TolB-like"/>
</dbReference>
<dbReference type="InterPro" id="IPR011659">
    <property type="entry name" value="PD40"/>
</dbReference>
<dbReference type="InterPro" id="IPR014167">
    <property type="entry name" value="Tol-Pal_TolB"/>
</dbReference>
<dbReference type="InterPro" id="IPR007195">
    <property type="entry name" value="TolB_N"/>
</dbReference>
<dbReference type="NCBIfam" id="TIGR02800">
    <property type="entry name" value="propeller_TolB"/>
    <property type="match status" value="1"/>
</dbReference>
<dbReference type="PANTHER" id="PTHR36842:SF1">
    <property type="entry name" value="PROTEIN TOLB"/>
    <property type="match status" value="1"/>
</dbReference>
<dbReference type="PANTHER" id="PTHR36842">
    <property type="entry name" value="PROTEIN TOLB HOMOLOG"/>
    <property type="match status" value="1"/>
</dbReference>
<dbReference type="Pfam" id="PF07676">
    <property type="entry name" value="PD40"/>
    <property type="match status" value="3"/>
</dbReference>
<dbReference type="Pfam" id="PF04052">
    <property type="entry name" value="TolB_N"/>
    <property type="match status" value="1"/>
</dbReference>
<dbReference type="SUPFAM" id="SSF52964">
    <property type="entry name" value="TolB, N-terminal domain"/>
    <property type="match status" value="1"/>
</dbReference>
<dbReference type="SUPFAM" id="SSF69304">
    <property type="entry name" value="Tricorn protease N-terminal domain"/>
    <property type="match status" value="1"/>
</dbReference>
<protein>
    <recommendedName>
        <fullName evidence="1">Tol-Pal system protein TolB</fullName>
    </recommendedName>
</protein>